<sequence length="499" mass="53389">MLHLFAGLDLHTGLLLLLALAFVLFYEAINGFHDTANAVATVIYTRAMRSQLAVVMAAVFNFLGVLLGGLSVAYAIVHMLPTDLLLNMGSSHGLAMVFSMLLAAIIWNLGTWYFGLPASSSHTLIGAIIGIGLTNALMTGTSVVDALNIPKVLSIFGSLIVSPIVGLVFAGGLIFLLRRYWSGTKKRARIHLTPAEREKKDGKKKPPFWTRIALILSAIGVAFSHGANDGQKGIGLVMLVLIGVAPAGFVVNMNATGYEITRTRDAINNVEAYFEQHPALLKQATGADQLVPAPEAGATQPAEFHCHPSNTINALNRLKGMLTTDVESYDKLSLDQRSQMRRIMLCVSDTIDKVVKMPGVSADDQRLLKKLKSDMLSTIEYAPVWIIMAVALALGIGTMIGWRRVATTIGEKIGKKGMTYAQGMSAQMTAAVSIGLASYTGMPVSTTHVLSSSVAGTMVVDGGGLQRKTVTSILMAWVFTLPAAVLLSGGLYWLSLQFL</sequence>
<keyword id="KW-0997">Cell inner membrane</keyword>
<keyword id="KW-1003">Cell membrane</keyword>
<keyword id="KW-0406">Ion transport</keyword>
<keyword id="KW-0460">Magnesium</keyword>
<keyword id="KW-0472">Membrane</keyword>
<keyword id="KW-0592">Phosphate transport</keyword>
<keyword id="KW-1185">Reference proteome</keyword>
<keyword id="KW-0769">Symport</keyword>
<keyword id="KW-0812">Transmembrane</keyword>
<keyword id="KW-1133">Transmembrane helix</keyword>
<keyword id="KW-0813">Transport</keyword>
<keyword id="KW-0862">Zinc</keyword>
<keyword id="KW-0864">Zinc transport</keyword>
<evidence type="ECO:0000255" key="1"/>
<evidence type="ECO:0000269" key="2">
    <source>
    </source>
</evidence>
<evidence type="ECO:0000269" key="3">
    <source>
    </source>
</evidence>
<evidence type="ECO:0000269" key="4">
    <source>
    </source>
</evidence>
<evidence type="ECO:0000269" key="5">
    <source>
    </source>
</evidence>
<evidence type="ECO:0000269" key="6">
    <source>
    </source>
</evidence>
<evidence type="ECO:0000269" key="7">
    <source>
    </source>
</evidence>
<evidence type="ECO:0000269" key="8">
    <source>
    </source>
</evidence>
<evidence type="ECO:0000269" key="9">
    <source>
    </source>
</evidence>
<evidence type="ECO:0000269" key="10">
    <source>
    </source>
</evidence>
<evidence type="ECO:0000303" key="11">
    <source>
    </source>
</evidence>
<evidence type="ECO:0000303" key="12">
    <source>
    </source>
</evidence>
<evidence type="ECO:0000303" key="13">
    <source>
    </source>
</evidence>
<evidence type="ECO:0000305" key="14"/>
<evidence type="ECO:0000305" key="15">
    <source>
    </source>
</evidence>
<proteinExistence type="evidence at protein level"/>
<protein>
    <recommendedName>
        <fullName evidence="14">Low-affinity inorganic phosphate transporter PitA</fullName>
    </recommendedName>
    <alternativeName>
        <fullName evidence="14">Metal phosphate:H(+) symporter PitA</fullName>
    </alternativeName>
</protein>
<feature type="chain" id="PRO_0000080782" description="Low-affinity inorganic phosphate transporter PitA">
    <location>
        <begin position="1"/>
        <end position="499"/>
    </location>
</feature>
<feature type="topological domain" description="Periplasmic" evidence="14">
    <location>
        <begin position="1"/>
        <end position="4"/>
    </location>
</feature>
<feature type="transmembrane region" description="Helical" evidence="1">
    <location>
        <begin position="5"/>
        <end position="25"/>
    </location>
</feature>
<feature type="topological domain" description="Cytoplasmic" evidence="14">
    <location>
        <begin position="26"/>
        <end position="51"/>
    </location>
</feature>
<feature type="transmembrane region" description="Helical" evidence="1">
    <location>
        <begin position="52"/>
        <end position="72"/>
    </location>
</feature>
<feature type="topological domain" description="Periplasmic" evidence="14">
    <location>
        <begin position="73"/>
        <end position="93"/>
    </location>
</feature>
<feature type="transmembrane region" description="Helical" evidence="1">
    <location>
        <begin position="94"/>
        <end position="114"/>
    </location>
</feature>
<feature type="topological domain" description="Cytoplasmic" evidence="14">
    <location>
        <begin position="115"/>
        <end position="123"/>
    </location>
</feature>
<feature type="transmembrane region" description="Helical" evidence="1">
    <location>
        <begin position="124"/>
        <end position="144"/>
    </location>
</feature>
<feature type="topological domain" description="Periplasmic" evidence="14">
    <location>
        <begin position="145"/>
        <end position="154"/>
    </location>
</feature>
<feature type="transmembrane region" description="Helical" evidence="1">
    <location>
        <begin position="155"/>
        <end position="175"/>
    </location>
</feature>
<feature type="topological domain" description="Cytoplasmic" evidence="14">
    <location>
        <begin position="176"/>
        <end position="206"/>
    </location>
</feature>
<feature type="transmembrane region" description="Helical" evidence="1">
    <location>
        <begin position="207"/>
        <end position="227"/>
    </location>
</feature>
<feature type="topological domain" description="Periplasmic" evidence="14">
    <location>
        <begin position="228"/>
        <end position="232"/>
    </location>
</feature>
<feature type="transmembrane region" description="Helical" evidence="1">
    <location>
        <begin position="233"/>
        <end position="253"/>
    </location>
</feature>
<feature type="topological domain" description="Cytoplasmic" evidence="14">
    <location>
        <begin position="254"/>
        <end position="381"/>
    </location>
</feature>
<feature type="transmembrane region" description="Helical" evidence="1">
    <location>
        <begin position="382"/>
        <end position="402"/>
    </location>
</feature>
<feature type="topological domain" description="Periplasmic" evidence="14">
    <location>
        <begin position="403"/>
        <end position="429"/>
    </location>
</feature>
<feature type="transmembrane region" description="Helical" evidence="1">
    <location>
        <begin position="430"/>
        <end position="450"/>
    </location>
</feature>
<feature type="topological domain" description="Cytoplasmic" evidence="14">
    <location>
        <begin position="451"/>
        <end position="472"/>
    </location>
</feature>
<feature type="transmembrane region" description="Helical" evidence="1">
    <location>
        <begin position="473"/>
        <end position="493"/>
    </location>
</feature>
<feature type="topological domain" description="Periplasmic" evidence="4">
    <location>
        <begin position="494"/>
        <end position="499"/>
    </location>
</feature>
<feature type="mutagenesis site" description="Loss of activity. Cannot grow on inorganic phosphate medium." evidence="3">
    <original>G</original>
    <variation>D</variation>
    <location>
        <position position="220"/>
    </location>
</feature>
<organism>
    <name type="scientific">Escherichia coli (strain K12)</name>
    <dbReference type="NCBI Taxonomy" id="83333"/>
    <lineage>
        <taxon>Bacteria</taxon>
        <taxon>Pseudomonadati</taxon>
        <taxon>Pseudomonadota</taxon>
        <taxon>Gammaproteobacteria</taxon>
        <taxon>Enterobacterales</taxon>
        <taxon>Enterobacteriaceae</taxon>
        <taxon>Escherichia</taxon>
    </lineage>
</organism>
<name>PITA_ECOLI</name>
<gene>
    <name evidence="11 12" type="primary">pitA</name>
    <name evidence="13" type="synonym">pit</name>
    <name type="ordered locus">b3493</name>
    <name type="ordered locus">JW3460</name>
</gene>
<comment type="function">
    <text evidence="2 3 6 7 8 9 10">Low-affinity inorganic phosphate transporter (PubMed:11489853, PubMed:328484, PubMed:6998957, PubMed:8110778). Mediates proton-driven uptake of soluble neutral metal phosphate (MeHP04) complexes (PubMed:8110778). It can use Mg(2+), Ca(2+), Co(2+) and Mn(2+) (PubMed:8110778). Activity impacts bacterial growth in low Mg(2+) conditions (PubMed:30276893). Is also involved in Zn(2+) uptake, probably via formation of a ZnHPO4 complex (PubMed:10713426). Can also transport arsenate (PubMed:328484). Involved in the uptake of tellurite (PubMed:23189244).</text>
</comment>
<comment type="catalytic activity">
    <reaction evidence="8 10 15">
        <text>phosphate(in) + H(+)(in) = phosphate(out) + H(+)(out)</text>
        <dbReference type="Rhea" id="RHEA:29939"/>
        <dbReference type="ChEBI" id="CHEBI:15378"/>
        <dbReference type="ChEBI" id="CHEBI:43474"/>
    </reaction>
</comment>
<comment type="catalytic activity">
    <reaction evidence="8">
        <text>arsenate(in) + H(+)(in) = arsenate(out) + H(+)(out)</text>
        <dbReference type="Rhea" id="RHEA:71827"/>
        <dbReference type="ChEBI" id="CHEBI:15378"/>
        <dbReference type="ChEBI" id="CHEBI:48597"/>
    </reaction>
</comment>
<comment type="activity regulation">
    <text evidence="2 7 8 9 10">Phosphate uptake is dependent on the presence of divalent cations, which form soluble metal phosphate (MeHP04) complexes (PubMed:10713426, PubMed:8110778). In Mg(2+)-limiting conditions, the PhoQP-regulated small protein MgtS and sRNA MgrR both regulate the PitA transporter, leading to increased intracellular Mg(2+) (PubMed:30276893). Metal phosphate uptake is inhibited at low internal pH (PubMed:8110778). Inhibited by the uncoupler carbonyl cyanide m-chlorophenylhydrazone (CCCP) (PubMed:328484). Is also inhibited by the energy uncoupler 2,4-dinitrophenol and the sulfhydryl reagent N-ethylmaleimide (PubMed:6998957).</text>
</comment>
<comment type="biophysicochemical properties">
    <kinetics>
        <KM evidence="3">1.9 uM for phosphate</KM>
        <Vmax evidence="3">58.0 nmol/min/mg enzyme (at pH 6.6 and 1.8 mM Mg(2+))</Vmax>
        <Vmax evidence="3">39.0 nmol/min/mg enzyme (at pH 7.0 and 10.0 mM Mg(2+))</Vmax>
    </kinetics>
</comment>
<comment type="subunit">
    <text evidence="7">Interacts with the small protein MgtS, and this interaction contributes to an increase in intracellular Mg(2+) content.</text>
</comment>
<comment type="subcellular location">
    <subcellularLocation>
        <location evidence="3 4">Cell inner membrane</location>
        <topology evidence="1">Multi-pass membrane protein</topology>
    </subcellularLocation>
</comment>
<comment type="induction">
    <text evidence="5 7">Expression is not constitutive, as initially thought, but regulated in response to levels of zinc and phosphate in the medium (PubMed:19054109). Expression is repressed by the PhoQP-regulated MgrR sRNA (PubMed:30276893).</text>
</comment>
<comment type="disruption phenotype">
    <text evidence="2 6">Disruption of the gene confers increased resistance to Zn(2+), associated with reduced accumulation of Zn(2+) when cells are exposed to concentrations of ZnSO(4) below the minimal inhibitory concentration (MIC) (PubMed:10713426). Mutant is approximately four-fold more tolerant to tellurite, and cell viability remains almost unchanged during prolonged exposure to the toxicant as compared with wild type (PubMed:23189244).</text>
</comment>
<comment type="miscellaneous">
    <text evidence="12">The Pit system in E.coli K12 consists of two transporters, PitA and PitB, which can transport phosphate independently of each other. Both proteins may have contributed to the kinetic values and substrate specificities determined in earlier studies.</text>
</comment>
<comment type="similarity">
    <text evidence="14">Belongs to the inorganic phosphate transporter (PiT) (TC 2.A.20) family. Pit subfamily.</text>
</comment>
<dbReference type="EMBL" id="U00039">
    <property type="protein sequence ID" value="AAB18469.1"/>
    <property type="molecule type" value="Genomic_DNA"/>
</dbReference>
<dbReference type="EMBL" id="U00096">
    <property type="protein sequence ID" value="AAC76518.1"/>
    <property type="molecule type" value="Genomic_DNA"/>
</dbReference>
<dbReference type="EMBL" id="AP009048">
    <property type="protein sequence ID" value="BAE77801.1"/>
    <property type="molecule type" value="Genomic_DNA"/>
</dbReference>
<dbReference type="PIR" id="S47713">
    <property type="entry name" value="S47713"/>
</dbReference>
<dbReference type="RefSeq" id="NP_417950.1">
    <property type="nucleotide sequence ID" value="NC_000913.3"/>
</dbReference>
<dbReference type="RefSeq" id="WP_000902780.1">
    <property type="nucleotide sequence ID" value="NZ_STEB01000046.1"/>
</dbReference>
<dbReference type="SMR" id="P0AFJ7"/>
<dbReference type="BioGRID" id="4262094">
    <property type="interactions" value="5"/>
</dbReference>
<dbReference type="FunCoup" id="P0AFJ7">
    <property type="interactions" value="537"/>
</dbReference>
<dbReference type="STRING" id="511145.b3493"/>
<dbReference type="TCDB" id="2.A.20.1.1">
    <property type="family name" value="the inorganic phosphate transporter (pit) family"/>
</dbReference>
<dbReference type="jPOST" id="P0AFJ7"/>
<dbReference type="PaxDb" id="511145-b3493"/>
<dbReference type="EnsemblBacteria" id="AAC76518">
    <property type="protein sequence ID" value="AAC76518"/>
    <property type="gene ID" value="b3493"/>
</dbReference>
<dbReference type="GeneID" id="93778500"/>
<dbReference type="GeneID" id="948009"/>
<dbReference type="KEGG" id="ecj:JW3460"/>
<dbReference type="KEGG" id="eco:b3493"/>
<dbReference type="KEGG" id="ecoc:C3026_18920"/>
<dbReference type="PATRIC" id="fig|1411691.4.peg.3229"/>
<dbReference type="EchoBASE" id="EB2142"/>
<dbReference type="eggNOG" id="COG0306">
    <property type="taxonomic scope" value="Bacteria"/>
</dbReference>
<dbReference type="HOGENOM" id="CLU_015355_4_0_6"/>
<dbReference type="InParanoid" id="P0AFJ7"/>
<dbReference type="OMA" id="GVNWQKA"/>
<dbReference type="OrthoDB" id="9779554at2"/>
<dbReference type="PhylomeDB" id="P0AFJ7"/>
<dbReference type="BioCyc" id="EcoCyc:PITA-MONOMER"/>
<dbReference type="BioCyc" id="MetaCyc:PITA-MONOMER"/>
<dbReference type="PRO" id="PR:P0AFJ7"/>
<dbReference type="Proteomes" id="UP000000625">
    <property type="component" value="Chromosome"/>
</dbReference>
<dbReference type="GO" id="GO:0005886">
    <property type="term" value="C:plasma membrane"/>
    <property type="evidence" value="ECO:0000314"/>
    <property type="project" value="EcoCyc"/>
</dbReference>
<dbReference type="GO" id="GO:1901683">
    <property type="term" value="F:arsenate ion transmembrane transporter activity"/>
    <property type="evidence" value="ECO:0000269"/>
    <property type="project" value="EcoCyc"/>
</dbReference>
<dbReference type="GO" id="GO:0005315">
    <property type="term" value="F:phosphate transmembrane transporter activity"/>
    <property type="evidence" value="ECO:0000315"/>
    <property type="project" value="EcoCyc"/>
</dbReference>
<dbReference type="GO" id="GO:0015295">
    <property type="term" value="F:solute:proton symporter activity"/>
    <property type="evidence" value="ECO:0000314"/>
    <property type="project" value="EcoCyc"/>
</dbReference>
<dbReference type="GO" id="GO:0015654">
    <property type="term" value="F:tellurite transmembrane transporter activity"/>
    <property type="evidence" value="ECO:0000315"/>
    <property type="project" value="EcoCyc"/>
</dbReference>
<dbReference type="GO" id="GO:0005385">
    <property type="term" value="F:zinc ion transmembrane transporter activity"/>
    <property type="evidence" value="ECO:0000315"/>
    <property type="project" value="EcoCyc"/>
</dbReference>
<dbReference type="GO" id="GO:1901684">
    <property type="term" value="P:arsenate ion transmembrane transport"/>
    <property type="evidence" value="ECO:0000269"/>
    <property type="project" value="EcoCyc"/>
</dbReference>
<dbReference type="GO" id="GO:0010960">
    <property type="term" value="P:magnesium ion homeostasis"/>
    <property type="evidence" value="ECO:0000314"/>
    <property type="project" value="EcoCyc"/>
</dbReference>
<dbReference type="GO" id="GO:0035435">
    <property type="term" value="P:phosphate ion transmembrane transport"/>
    <property type="evidence" value="ECO:0000315"/>
    <property type="project" value="EcoCyc"/>
</dbReference>
<dbReference type="GO" id="GO:0015710">
    <property type="term" value="P:tellurite transport"/>
    <property type="evidence" value="ECO:0000315"/>
    <property type="project" value="EcoCyc"/>
</dbReference>
<dbReference type="InterPro" id="IPR047818">
    <property type="entry name" value="Phos_trans_PitA_PitB"/>
</dbReference>
<dbReference type="InterPro" id="IPR001204">
    <property type="entry name" value="Phos_transporter"/>
</dbReference>
<dbReference type="NCBIfam" id="NF033774">
    <property type="entry name" value="phos_trans_PitA"/>
    <property type="match status" value="1"/>
</dbReference>
<dbReference type="PANTHER" id="PTHR11101:SF65">
    <property type="entry name" value="LOW-AFFINITY INORGANIC PHOSPHATE TRANSPORTER PITA-RELATED"/>
    <property type="match status" value="1"/>
</dbReference>
<dbReference type="PANTHER" id="PTHR11101">
    <property type="entry name" value="PHOSPHATE TRANSPORTER"/>
    <property type="match status" value="1"/>
</dbReference>
<dbReference type="Pfam" id="PF01384">
    <property type="entry name" value="PHO4"/>
    <property type="match status" value="1"/>
</dbReference>
<accession>P0AFJ7</accession>
<accession>P37308</accession>
<accession>Q2M7F5</accession>
<reference key="1">
    <citation type="journal article" date="1994" name="Nucleic Acids Res.">
        <title>Analysis of the Escherichia coli genome. V. DNA sequence of the region from 76.0 to 81.5 minutes.</title>
        <authorList>
            <person name="Sofia H.J."/>
            <person name="Burland V."/>
            <person name="Daniels D.L."/>
            <person name="Plunkett G. III"/>
            <person name="Blattner F.R."/>
        </authorList>
    </citation>
    <scope>NUCLEOTIDE SEQUENCE [LARGE SCALE GENOMIC DNA]</scope>
    <source>
        <strain>K12 / MG1655 / ATCC 47076</strain>
    </source>
</reference>
<reference key="2">
    <citation type="journal article" date="1997" name="Science">
        <title>The complete genome sequence of Escherichia coli K-12.</title>
        <authorList>
            <person name="Blattner F.R."/>
            <person name="Plunkett G. III"/>
            <person name="Bloch C.A."/>
            <person name="Perna N.T."/>
            <person name="Burland V."/>
            <person name="Riley M."/>
            <person name="Collado-Vides J."/>
            <person name="Glasner J.D."/>
            <person name="Rode C.K."/>
            <person name="Mayhew G.F."/>
            <person name="Gregor J."/>
            <person name="Davis N.W."/>
            <person name="Kirkpatrick H.A."/>
            <person name="Goeden M.A."/>
            <person name="Rose D.J."/>
            <person name="Mau B."/>
            <person name="Shao Y."/>
        </authorList>
    </citation>
    <scope>NUCLEOTIDE SEQUENCE [LARGE SCALE GENOMIC DNA]</scope>
    <source>
        <strain>K12 / MG1655 / ATCC 47076</strain>
    </source>
</reference>
<reference key="3">
    <citation type="journal article" date="2006" name="Mol. Syst. Biol.">
        <title>Highly accurate genome sequences of Escherichia coli K-12 strains MG1655 and W3110.</title>
        <authorList>
            <person name="Hayashi K."/>
            <person name="Morooka N."/>
            <person name="Yamamoto Y."/>
            <person name="Fujita K."/>
            <person name="Isono K."/>
            <person name="Choi S."/>
            <person name="Ohtsubo E."/>
            <person name="Baba T."/>
            <person name="Wanner B.L."/>
            <person name="Mori H."/>
            <person name="Horiuchi T."/>
        </authorList>
    </citation>
    <scope>NUCLEOTIDE SEQUENCE [LARGE SCALE GENOMIC DNA]</scope>
    <source>
        <strain>K12 / W3110 / ATCC 27325 / DSM 5911</strain>
    </source>
</reference>
<reference key="4">
    <citation type="journal article" date="1977" name="J. Bacteriol.">
        <title>Two systems for the uptake of phosphate in Escherichia coli.</title>
        <authorList>
            <person name="Rosenberg H."/>
            <person name="Gerdes R.G."/>
            <person name="Chegwidden K."/>
        </authorList>
    </citation>
    <scope>FUNCTION</scope>
    <scope>CATALYTIC ACTIVITY</scope>
    <scope>ACTIVITY REGULATION</scope>
</reference>
<reference key="5">
    <citation type="journal article" date="1980" name="J. Bacteriol.">
        <title>Characterization of two genetically separable inorganic phosphate transport systems in Escherichia coli.</title>
        <authorList>
            <person name="Willsky G.R."/>
            <person name="Malamy M.H."/>
        </authorList>
    </citation>
    <scope>FUNCTION</scope>
    <scope>ACTIVITY REGULATION</scope>
</reference>
<reference key="6">
    <citation type="journal article" date="1994" name="Biochemistry">
        <title>Translocation of metal phosphate via the phosphate inorganic transport system of Escherichia coli.</title>
        <authorList>
            <person name="van Veen H.W."/>
            <person name="Abee T."/>
            <person name="Kortstee G.J."/>
            <person name="Konings W.N."/>
            <person name="Zehnder A.J."/>
        </authorList>
    </citation>
    <scope>FUNCTION</scope>
    <scope>CATALYTIC ACTIVITY</scope>
    <scope>ACTIVITY REGULATION</scope>
</reference>
<reference key="7">
    <citation type="journal article" date="2000" name="FEMS Microbiol. Lett.">
        <title>Evidence for the transport of zinc(II) ions via the pit inorganic phosphate transport system in Escherichia coli.</title>
        <authorList>
            <person name="Beard S.J."/>
            <person name="Hashim R."/>
            <person name="Wu G."/>
            <person name="Binet M.R."/>
            <person name="Hughes M.N."/>
            <person name="Poole R.K."/>
        </authorList>
    </citation>
    <scope>FUNCTION</scope>
    <scope>ACTIVITY REGULATION</scope>
    <scope>DISRUPTION PHENOTYPE</scope>
    <source>
        <strain>K12</strain>
    </source>
</reference>
<reference key="8">
    <citation type="journal article" date="2001" name="J. Bacteriol.">
        <title>Characterization of PitA and PitB from Escherichia coli.</title>
        <authorList>
            <person name="Harris R.M."/>
            <person name="Webb D.C."/>
            <person name="Howitt S.M."/>
            <person name="Cox G.B."/>
        </authorList>
    </citation>
    <scope>FUNCTION</scope>
    <scope>BIOPHYSICOCHEMICAL PROPERTIES</scope>
    <scope>SUBCELLULAR LOCATION</scope>
    <scope>MUTAGENESIS OF GLY-220</scope>
    <source>
        <strain>K12</strain>
    </source>
</reference>
<reference key="9">
    <citation type="journal article" date="2005" name="Science">
        <title>Global topology analysis of the Escherichia coli inner membrane proteome.</title>
        <authorList>
            <person name="Daley D.O."/>
            <person name="Rapp M."/>
            <person name="Granseth E."/>
            <person name="Melen K."/>
            <person name="Drew D."/>
            <person name="von Heijne G."/>
        </authorList>
    </citation>
    <scope>TOPOLOGY [LARGE SCALE ANALYSIS]</scope>
    <scope>SUBCELLULAR LOCATION</scope>
    <source>
        <strain>K12 / MG1655 / ATCC 47076</strain>
    </source>
</reference>
<reference key="10">
    <citation type="journal article" date="2008" name="FEMS Microbiol. Lett.">
        <title>Expression of the PitA phosphate/metal transporter of Escherichia coli is responsive to zinc and inorganic phosphate levels.</title>
        <authorList>
            <person name="Jackson R.J."/>
            <person name="Binet M.R."/>
            <person name="Lee L.J."/>
            <person name="Ma R."/>
            <person name="Graham A.I."/>
            <person name="McLeod C.W."/>
            <person name="Poole R.K."/>
        </authorList>
    </citation>
    <scope>INDUCTION</scope>
</reference>
<reference key="11">
    <citation type="journal article" date="2012" name="MicrobiologyOpen">
        <title>Tellurite enters Escherichia coli mainly through the PitA phosphate transporter.</title>
        <authorList>
            <person name="Elias A.O."/>
            <person name="Abarca M.J."/>
            <person name="Montes R.A."/>
            <person name="Chasteen T.G."/>
            <person name="Perez-Donoso J.M."/>
            <person name="Vasquez C.C."/>
        </authorList>
    </citation>
    <scope>FUNCTION IN TELLURITE UPTAKE</scope>
    <scope>DISRUPTION PHENOTYPE</scope>
</reference>
<reference key="12">
    <citation type="journal article" date="2019" name="Mol. Microbiol.">
        <title>The small protein MgtS and small RNA MgrR modulate the PitA phosphate symporter to boost intracellular magnesium levels.</title>
        <authorList>
            <person name="Yin X."/>
            <person name="Wu Orr M."/>
            <person name="Wang H."/>
            <person name="Hobbs E.C."/>
            <person name="Shabalina S.A."/>
            <person name="Storz G."/>
        </authorList>
    </citation>
    <scope>FUNCTION</scope>
    <scope>ACTIVITY REGULATION</scope>
    <scope>INTERACTION WITH MGTS</scope>
    <scope>TRANSCRIPTIONAL REGULATION</scope>
</reference>